<sequence>MTTAKEPSASGKSVQQQEQELVGSNPPQRNWKGIAIALLVILVICSLIVTSVILLTPAEDNSLSQKKKVTVEDLFSEDFKIHDPEAKWISDTEFIYREQKGTVRLWNVETNISTVLIEGKKIESLRAIRYEISPDREYALFSYNVEPIYQHSYTGYYVLSKIPHGDPQSLDPPEVSNAKLQYAGWGPKGQQLIFIFENNIYYCAHVGKQAIRVVSTGKEGVIYNGLSDWLYEEEILKTHIAHWWSPDGTRLAYATINDSRVPIMELPTYTGSIYPTVKPYHYPKAGSENPSISLHVIGLNGPTHDLEMMPPDDPRMREYYITMVKWATSTKVAVTWLNRAQNVSILTLCDATTGVCTKKHEDESEAWLHRQNEEPVFSKDGRKFFFIRAIPQGGRGKFYHITMSLSQPNSSNDNIQSITSGDWDVTKILAYDEKGNKIYFLSTEDLPRRRQLYSANTVGNFNRQCLSCDLVDNCTYFSASFSHSMDFFLLKCEGPGVPMVTVHNTTDKKKMFDLETNEHVKKAINDRQMPKVEYRDIEIDDYNLPMQILKPATFTDTTHYPLLLVVDGTPGSQSVAEKFEVSWETVMVSSHGAVVVKCDGRGSGFQGTKLLHEVRRRLGLLEEKDQMEAVRTMLKEQYIDRTRVAVFGKDYGGYLSTYILPAKGENQGQTFTCGSALSPITDFKLYASAFSERYLGLHGLDNRAYEMTKVAHRVSALEEQQFLIIHPTADEKIHFQHTAELITQLIRGKANYSLQIYPDESHYFTSSSLKQHLYRSIINFFVECFRIQDKLPTVTAKEDEEED</sequence>
<gene>
    <name evidence="2" type="primary">DPP6</name>
</gene>
<comment type="function">
    <text evidence="2">Regulatory subunit of Kv4/D (Shal)-type voltage-gated rapidly inactivating A-type potassium channels. Modulates the activity and gating characteristics of the potassium channel KCND2 amd KCND3. Promotes cell surface expression of the potassium channel KCND2 (By similarity). Has no dipeptidyl aminopeptidase activity (By similarity).</text>
</comment>
<comment type="subunit">
    <text evidence="2 3">Homodimer (in vitro). Interacts with KCND2. Identified in a complex with KCND2 and KCNIP2. Forms an octameric complex composed of four DPP6 subunits bound to the KCND2 tetramer (By similarity). Interacts with KCND3; this interaction modulates the channel gating kinetics namely channel activation and inactivation kinetics and rate of recovery from inactivation (By similarity).</text>
</comment>
<comment type="subcellular location">
    <subcellularLocation>
        <location evidence="2">Cell membrane</location>
        <topology evidence="2">Single-pass type II membrane protein</topology>
    </subcellularLocation>
</comment>
<comment type="PTM">
    <text evidence="2">N-glycosylated.</text>
</comment>
<comment type="similarity">
    <text evidence="6">Belongs to the peptidase S9B family.</text>
</comment>
<keyword id="KW-1003">Cell membrane</keyword>
<keyword id="KW-1015">Disulfide bond</keyword>
<keyword id="KW-0325">Glycoprotein</keyword>
<keyword id="KW-0472">Membrane</keyword>
<keyword id="KW-1185">Reference proteome</keyword>
<keyword id="KW-0735">Signal-anchor</keyword>
<keyword id="KW-0812">Transmembrane</keyword>
<keyword id="KW-1133">Transmembrane helix</keyword>
<evidence type="ECO:0000250" key="1"/>
<evidence type="ECO:0000250" key="2">
    <source>
        <dbReference type="UniProtKB" id="P42658"/>
    </source>
</evidence>
<evidence type="ECO:0000250" key="3">
    <source>
        <dbReference type="UniProtKB" id="Q9Z218"/>
    </source>
</evidence>
<evidence type="ECO:0000255" key="4"/>
<evidence type="ECO:0000256" key="5">
    <source>
        <dbReference type="SAM" id="MobiDB-lite"/>
    </source>
</evidence>
<evidence type="ECO:0000305" key="6"/>
<organism>
    <name type="scientific">Pan troglodytes</name>
    <name type="common">Chimpanzee</name>
    <dbReference type="NCBI Taxonomy" id="9598"/>
    <lineage>
        <taxon>Eukaryota</taxon>
        <taxon>Metazoa</taxon>
        <taxon>Chordata</taxon>
        <taxon>Craniata</taxon>
        <taxon>Vertebrata</taxon>
        <taxon>Euteleostomi</taxon>
        <taxon>Mammalia</taxon>
        <taxon>Eutheria</taxon>
        <taxon>Euarchontoglires</taxon>
        <taxon>Primates</taxon>
        <taxon>Haplorrhini</taxon>
        <taxon>Catarrhini</taxon>
        <taxon>Hominidae</taxon>
        <taxon>Pan</taxon>
    </lineage>
</organism>
<protein>
    <recommendedName>
        <fullName evidence="2">A-type potassium channel modulatory protein DPP6</fullName>
    </recommendedName>
    <alternativeName>
        <fullName>Dipeptidyl aminopeptidase-like protein 6</fullName>
    </alternativeName>
    <alternativeName>
        <fullName>Dipeptidyl peptidase 6</fullName>
    </alternativeName>
    <alternativeName>
        <fullName>Dipeptidyl peptidase VI</fullName>
        <shortName>DPP VI</shortName>
    </alternativeName>
</protein>
<name>DPP6_PANTR</name>
<reference key="1">
    <citation type="journal article" date="2004" name="Cell">
        <title>Accelerated evolution of nervous system genes in the origin of Homo sapiens.</title>
        <authorList>
            <person name="Dorus S."/>
            <person name="Vallender E.J."/>
            <person name="Evans P.D."/>
            <person name="Anderson J.R."/>
            <person name="Gilbert S.L."/>
            <person name="Mahowald M."/>
            <person name="Wyckoff G.J."/>
            <person name="Malcom C.M."/>
            <person name="Lahn B.T."/>
        </authorList>
    </citation>
    <scope>NUCLEOTIDE SEQUENCE [MRNA]</scope>
</reference>
<feature type="chain" id="PRO_0000122411" description="A-type potassium channel modulatory protein DPP6">
    <location>
        <begin position="1"/>
        <end position="803"/>
    </location>
</feature>
<feature type="topological domain" description="Cytoplasmic" evidence="4">
    <location>
        <begin position="1"/>
        <end position="33"/>
    </location>
</feature>
<feature type="transmembrane region" description="Helical; Signal-anchor for type II membrane protein" evidence="4">
    <location>
        <begin position="34"/>
        <end position="54"/>
    </location>
</feature>
<feature type="topological domain" description="Extracellular" evidence="4">
    <location>
        <begin position="55"/>
        <end position="803"/>
    </location>
</feature>
<feature type="region of interest" description="Disordered" evidence="5">
    <location>
        <begin position="1"/>
        <end position="24"/>
    </location>
</feature>
<feature type="compositionally biased region" description="Polar residues" evidence="5">
    <location>
        <begin position="1"/>
        <end position="19"/>
    </location>
</feature>
<feature type="glycosylation site" description="N-linked (GlcNAc...) asparagine" evidence="4">
    <location>
        <position position="111"/>
    </location>
</feature>
<feature type="glycosylation site" description="N-linked (GlcNAc...) asparagine" evidence="4">
    <location>
        <position position="257"/>
    </location>
</feature>
<feature type="glycosylation site" description="N-linked (GlcNAc...) asparagine" evidence="4">
    <location>
        <position position="342"/>
    </location>
</feature>
<feature type="glycosylation site" description="N-linked (GlcNAc...) asparagine" evidence="4">
    <location>
        <position position="409"/>
    </location>
</feature>
<feature type="glycosylation site" description="N-linked (GlcNAc...) asparagine" evidence="4">
    <location>
        <position position="473"/>
    </location>
</feature>
<feature type="glycosylation site" description="N-linked (GlcNAc...) asparagine" evidence="4">
    <location>
        <position position="504"/>
    </location>
</feature>
<feature type="glycosylation site" description="N-linked (GlcNAc...) asparagine" evidence="4">
    <location>
        <position position="751"/>
    </location>
</feature>
<feature type="disulfide bond" evidence="1">
    <location>
        <begin position="349"/>
        <end position="356"/>
    </location>
</feature>
<feature type="disulfide bond" evidence="1">
    <location>
        <begin position="465"/>
        <end position="468"/>
    </location>
</feature>
<feature type="disulfide bond" evidence="1">
    <location>
        <begin position="474"/>
        <end position="492"/>
    </location>
</feature>
<feature type="disulfide bond" evidence="1">
    <location>
        <begin position="673"/>
        <end position="784"/>
    </location>
</feature>
<dbReference type="EMBL" id="AY665278">
    <property type="protein sequence ID" value="AAV74316.1"/>
    <property type="molecule type" value="mRNA"/>
</dbReference>
<dbReference type="RefSeq" id="NP_001029333.1">
    <property type="nucleotide sequence ID" value="NM_001034161.1"/>
</dbReference>
<dbReference type="SMR" id="Q5IS50"/>
<dbReference type="FunCoup" id="Q5IS50">
    <property type="interactions" value="390"/>
</dbReference>
<dbReference type="STRING" id="9598.ENSPTRP00000058036"/>
<dbReference type="ESTHER" id="pantr-dpp6">
    <property type="family name" value="DPP4N_Peptidase_S9"/>
</dbReference>
<dbReference type="MEROPS" id="S09.973"/>
<dbReference type="GlyCosmos" id="Q5IS50">
    <property type="glycosylation" value="7 sites, No reported glycans"/>
</dbReference>
<dbReference type="PaxDb" id="9598-ENSPTRP00000058036"/>
<dbReference type="GeneID" id="463835"/>
<dbReference type="KEGG" id="ptr:463835"/>
<dbReference type="CTD" id="1804"/>
<dbReference type="eggNOG" id="KOG2100">
    <property type="taxonomic scope" value="Eukaryota"/>
</dbReference>
<dbReference type="InParanoid" id="Q5IS50"/>
<dbReference type="OrthoDB" id="5629at9604"/>
<dbReference type="Proteomes" id="UP000002277">
    <property type="component" value="Unplaced"/>
</dbReference>
<dbReference type="GO" id="GO:0005886">
    <property type="term" value="C:plasma membrane"/>
    <property type="evidence" value="ECO:0000250"/>
    <property type="project" value="UniProtKB"/>
</dbReference>
<dbReference type="GO" id="GO:0008076">
    <property type="term" value="C:voltage-gated potassium channel complex"/>
    <property type="evidence" value="ECO:0000250"/>
    <property type="project" value="UniProtKB"/>
</dbReference>
<dbReference type="GO" id="GO:0015459">
    <property type="term" value="F:potassium channel regulator activity"/>
    <property type="evidence" value="ECO:0000250"/>
    <property type="project" value="UniProtKB"/>
</dbReference>
<dbReference type="GO" id="GO:0008236">
    <property type="term" value="F:serine-type peptidase activity"/>
    <property type="evidence" value="ECO:0007669"/>
    <property type="project" value="InterPro"/>
</dbReference>
<dbReference type="GO" id="GO:0072659">
    <property type="term" value="P:protein localization to plasma membrane"/>
    <property type="evidence" value="ECO:0000250"/>
    <property type="project" value="UniProtKB"/>
</dbReference>
<dbReference type="GO" id="GO:0006508">
    <property type="term" value="P:proteolysis"/>
    <property type="evidence" value="ECO:0007669"/>
    <property type="project" value="InterPro"/>
</dbReference>
<dbReference type="GO" id="GO:1901379">
    <property type="term" value="P:regulation of potassium ion transmembrane transport"/>
    <property type="evidence" value="ECO:0000250"/>
    <property type="project" value="UniProtKB"/>
</dbReference>
<dbReference type="FunFam" id="2.140.10.30:FF:000001">
    <property type="entry name" value="Dipeptidyl peptidase 4"/>
    <property type="match status" value="1"/>
</dbReference>
<dbReference type="FunFam" id="3.40.50.1820:FF:000003">
    <property type="entry name" value="Dipeptidyl peptidase 4"/>
    <property type="match status" value="1"/>
</dbReference>
<dbReference type="Gene3D" id="3.40.50.1820">
    <property type="entry name" value="alpha/beta hydrolase"/>
    <property type="match status" value="1"/>
</dbReference>
<dbReference type="Gene3D" id="2.140.10.30">
    <property type="entry name" value="Dipeptidylpeptidase IV, N-terminal domain"/>
    <property type="match status" value="1"/>
</dbReference>
<dbReference type="InterPro" id="IPR029058">
    <property type="entry name" value="AB_hydrolase_fold"/>
</dbReference>
<dbReference type="InterPro" id="IPR001375">
    <property type="entry name" value="Peptidase_S9_cat"/>
</dbReference>
<dbReference type="InterPro" id="IPR002469">
    <property type="entry name" value="Peptidase_S9B_N"/>
</dbReference>
<dbReference type="InterPro" id="IPR050278">
    <property type="entry name" value="Serine_Prot_S9B/DPPIV"/>
</dbReference>
<dbReference type="PANTHER" id="PTHR11731:SF20">
    <property type="entry name" value="DIPEPTIDYL AMINOPEPTIDASE-LIKE PROTEIN 6"/>
    <property type="match status" value="1"/>
</dbReference>
<dbReference type="PANTHER" id="PTHR11731">
    <property type="entry name" value="PROTEASE FAMILY S9B,C DIPEPTIDYL-PEPTIDASE IV-RELATED"/>
    <property type="match status" value="1"/>
</dbReference>
<dbReference type="Pfam" id="PF00930">
    <property type="entry name" value="DPPIV_N"/>
    <property type="match status" value="1"/>
</dbReference>
<dbReference type="Pfam" id="PF00326">
    <property type="entry name" value="Peptidase_S9"/>
    <property type="match status" value="1"/>
</dbReference>
<dbReference type="SUPFAM" id="SSF53474">
    <property type="entry name" value="alpha/beta-Hydrolases"/>
    <property type="match status" value="1"/>
</dbReference>
<dbReference type="SUPFAM" id="SSF82171">
    <property type="entry name" value="DPP6 N-terminal domain-like"/>
    <property type="match status" value="1"/>
</dbReference>
<proteinExistence type="evidence at transcript level"/>
<accession>Q5IS50</accession>